<feature type="chain" id="PRO_0000309266" description="Protein FAM221B">
    <location>
        <begin position="1"/>
        <end position="507"/>
    </location>
</feature>
<feature type="region of interest" description="Disordered" evidence="1">
    <location>
        <begin position="1"/>
        <end position="100"/>
    </location>
</feature>
<feature type="region of interest" description="Disordered" evidence="1">
    <location>
        <begin position="154"/>
        <end position="310"/>
    </location>
</feature>
<feature type="region of interest" description="Disordered" evidence="1">
    <location>
        <begin position="486"/>
        <end position="507"/>
    </location>
</feature>
<feature type="compositionally biased region" description="Polar residues" evidence="1">
    <location>
        <begin position="88"/>
        <end position="100"/>
    </location>
</feature>
<feature type="compositionally biased region" description="Acidic residues" evidence="1">
    <location>
        <begin position="167"/>
        <end position="177"/>
    </location>
</feature>
<feature type="compositionally biased region" description="Polar residues" evidence="1">
    <location>
        <begin position="182"/>
        <end position="193"/>
    </location>
</feature>
<feature type="compositionally biased region" description="Acidic residues" evidence="1">
    <location>
        <begin position="208"/>
        <end position="222"/>
    </location>
</feature>
<feature type="compositionally biased region" description="Acidic residues" evidence="1">
    <location>
        <begin position="270"/>
        <end position="281"/>
    </location>
</feature>
<feature type="modified residue" description="Phosphoserine" evidence="3">
    <location>
        <position position="270"/>
    </location>
</feature>
<dbReference type="EMBL" id="BC081906">
    <property type="protein sequence ID" value="AAH81906.1"/>
    <property type="molecule type" value="mRNA"/>
</dbReference>
<dbReference type="RefSeq" id="NP_001013956.2">
    <property type="nucleotide sequence ID" value="NM_001013934.2"/>
</dbReference>
<dbReference type="FunCoup" id="Q66HD8">
    <property type="interactions" value="9"/>
</dbReference>
<dbReference type="CarbonylDB" id="Q66HD8"/>
<dbReference type="GlyGen" id="Q66HD8">
    <property type="glycosylation" value="1 site"/>
</dbReference>
<dbReference type="iPTMnet" id="Q66HD8"/>
<dbReference type="PhosphoSitePlus" id="Q66HD8"/>
<dbReference type="PaxDb" id="10116-ENSRNOP00000031403"/>
<dbReference type="GeneID" id="298398"/>
<dbReference type="KEGG" id="rno:298398"/>
<dbReference type="UCSC" id="RGD:1310425">
    <property type="organism name" value="rat"/>
</dbReference>
<dbReference type="AGR" id="RGD:1310425"/>
<dbReference type="CTD" id="392307"/>
<dbReference type="RGD" id="1310425">
    <property type="gene designation" value="Fam221b"/>
</dbReference>
<dbReference type="eggNOG" id="ENOG502R7X0">
    <property type="taxonomic scope" value="Eukaryota"/>
</dbReference>
<dbReference type="HOGENOM" id="CLU_053868_1_0_1"/>
<dbReference type="InParanoid" id="Q66HD8"/>
<dbReference type="PhylomeDB" id="Q66HD8"/>
<dbReference type="TreeFam" id="TF328347"/>
<dbReference type="PRO" id="PR:Q66HD8"/>
<dbReference type="Proteomes" id="UP000002494">
    <property type="component" value="Unplaced"/>
</dbReference>
<dbReference type="InterPro" id="IPR026755">
    <property type="entry name" value="Fam221a/b"/>
</dbReference>
<dbReference type="PANTHER" id="PTHR31214">
    <property type="entry name" value="PROTEIN FAM221A-RELATED"/>
    <property type="match status" value="1"/>
</dbReference>
<dbReference type="PANTHER" id="PTHR31214:SF3">
    <property type="entry name" value="PROTEIN FAM221B"/>
    <property type="match status" value="1"/>
</dbReference>
<dbReference type="Pfam" id="PF14753">
    <property type="entry name" value="FAM221"/>
    <property type="match status" value="1"/>
</dbReference>
<keyword id="KW-0597">Phosphoprotein</keyword>
<keyword id="KW-1185">Reference proteome</keyword>
<organism>
    <name type="scientific">Rattus norvegicus</name>
    <name type="common">Rat</name>
    <dbReference type="NCBI Taxonomy" id="10116"/>
    <lineage>
        <taxon>Eukaryota</taxon>
        <taxon>Metazoa</taxon>
        <taxon>Chordata</taxon>
        <taxon>Craniata</taxon>
        <taxon>Vertebrata</taxon>
        <taxon>Euteleostomi</taxon>
        <taxon>Mammalia</taxon>
        <taxon>Eutheria</taxon>
        <taxon>Euarchontoglires</taxon>
        <taxon>Glires</taxon>
        <taxon>Rodentia</taxon>
        <taxon>Myomorpha</taxon>
        <taxon>Muroidea</taxon>
        <taxon>Muridae</taxon>
        <taxon>Murinae</taxon>
        <taxon>Rattus</taxon>
    </lineage>
</organism>
<comment type="similarity">
    <text evidence="2">Belongs to the FAM221 family.</text>
</comment>
<evidence type="ECO:0000256" key="1">
    <source>
        <dbReference type="SAM" id="MobiDB-lite"/>
    </source>
</evidence>
<evidence type="ECO:0000305" key="2"/>
<evidence type="ECO:0007744" key="3">
    <source>
    </source>
</evidence>
<proteinExistence type="evidence at protein level"/>
<protein>
    <recommendedName>
        <fullName>Protein FAM221B</fullName>
    </recommendedName>
</protein>
<reference key="1">
    <citation type="journal article" date="2004" name="Genome Res.">
        <title>The status, quality, and expansion of the NIH full-length cDNA project: the Mammalian Gene Collection (MGC).</title>
        <authorList>
            <consortium name="The MGC Project Team"/>
        </authorList>
    </citation>
    <scope>NUCLEOTIDE SEQUENCE [LARGE SCALE MRNA]</scope>
    <source>
        <tissue>Testis</tissue>
    </source>
</reference>
<reference key="2">
    <citation type="journal article" date="2012" name="Nat. Commun.">
        <title>Quantitative maps of protein phosphorylation sites across 14 different rat organs and tissues.</title>
        <authorList>
            <person name="Lundby A."/>
            <person name="Secher A."/>
            <person name="Lage K."/>
            <person name="Nordsborg N.B."/>
            <person name="Dmytriyev A."/>
            <person name="Lundby C."/>
            <person name="Olsen J.V."/>
        </authorList>
    </citation>
    <scope>PHOSPHORYLATION [LARGE SCALE ANALYSIS] AT SER-270</scope>
    <scope>IDENTIFICATION BY MASS SPECTROMETRY [LARGE SCALE ANALYSIS]</scope>
</reference>
<name>F221B_RAT</name>
<gene>
    <name type="primary">Fam221b</name>
</gene>
<sequence>MEADKTSEGPPATQDAKKHPSLTVPHAEDLPEATTPESPPHLLSSQEYFQPPKVHSKTYPSLDLGTKDSEDLQDPSVSETPLKLDTANLPSTPSQSSAQSVISLERAISKIPLDDFIYENSISEVQEEPLPLSPTTDISKYEYPISDVQEEPLLLSPTTNISKYEDSISDVQEEPLEDTPTADISETEYSISDVQEEPLEPPPTADIPESEDYISDDHEEPLEPPPTADIPESSYEFISDKVPQTQVPESEPFPKHSVPEPSAQAKEAASADEEEAEEEELTGGTSKTAAAGSEHHARKKKEKRGCESRPVVPAKRAELVEMAKAMHRKQFDDQVNDLFQWEKNSSLKAIQTGIYIGWRCPHYLWDCFRIGDESKCFCGHLLKEHQIISDLSVPCSVSQCRCLMFCFIPSRPEEVGEFWLKKRATFDPKAWRAQCRCKHTHEEHAATGSHPCRHRGCYCNSFESNFLCAACDRRWEEHETFFETEETKRRGKRPYGTNTAKNRHRPF</sequence>
<accession>Q66HD8</accession>